<keyword id="KW-0233">DNA recombination</keyword>
<keyword id="KW-0238">DNA-binding</keyword>
<keyword id="KW-1185">Reference proteome</keyword>
<keyword id="KW-0804">Transcription</keyword>
<keyword id="KW-0805">Transcription regulation</keyword>
<keyword id="KW-0810">Translation regulation</keyword>
<comment type="function">
    <text evidence="1">This protein is one of the two subunits of integration host factor, a specific DNA-binding protein that functions in genetic recombination as well as in transcriptional and translational control.</text>
</comment>
<comment type="subunit">
    <text evidence="1">Heterodimer of an alpha and a beta chain.</text>
</comment>
<comment type="similarity">
    <text evidence="1">Belongs to the bacterial histone-like protein family.</text>
</comment>
<reference key="1">
    <citation type="journal article" date="2007" name="Science">
        <title>Legumes symbioses: absence of nod genes in photosynthetic bradyrhizobia.</title>
        <authorList>
            <person name="Giraud E."/>
            <person name="Moulin L."/>
            <person name="Vallenet D."/>
            <person name="Barbe V."/>
            <person name="Cytryn E."/>
            <person name="Avarre J.-C."/>
            <person name="Jaubert M."/>
            <person name="Simon D."/>
            <person name="Cartieaux F."/>
            <person name="Prin Y."/>
            <person name="Bena G."/>
            <person name="Hannibal L."/>
            <person name="Fardoux J."/>
            <person name="Kojadinovic M."/>
            <person name="Vuillet L."/>
            <person name="Lajus A."/>
            <person name="Cruveiller S."/>
            <person name="Rouy Z."/>
            <person name="Mangenot S."/>
            <person name="Segurens B."/>
            <person name="Dossat C."/>
            <person name="Franck W.L."/>
            <person name="Chang W.-S."/>
            <person name="Saunders E."/>
            <person name="Bruce D."/>
            <person name="Richardson P."/>
            <person name="Normand P."/>
            <person name="Dreyfus B."/>
            <person name="Pignol D."/>
            <person name="Stacey G."/>
            <person name="Emerich D."/>
            <person name="Vermeglio A."/>
            <person name="Medigue C."/>
            <person name="Sadowsky M."/>
        </authorList>
    </citation>
    <scope>NUCLEOTIDE SEQUENCE [LARGE SCALE GENOMIC DNA]</scope>
    <source>
        <strain>ORS 278</strain>
    </source>
</reference>
<protein>
    <recommendedName>
        <fullName evidence="1">Integration host factor subunit beta</fullName>
        <shortName evidence="1">IHF-beta</shortName>
    </recommendedName>
</protein>
<sequence length="105" mass="11740">MIKSELVQRIAEHNPHLYQRDVENIVNAILDEIVAALARGDRVELRGFGAFSVKHRPARAGRNPRTGAHVPVDQKSVPFFKTGKEMRERLNRDNPEGAAADDADD</sequence>
<gene>
    <name evidence="1" type="primary">ihfB</name>
    <name evidence="1" type="synonym">himD</name>
    <name type="ordered locus">BRADO0094</name>
</gene>
<evidence type="ECO:0000255" key="1">
    <source>
        <dbReference type="HAMAP-Rule" id="MF_00381"/>
    </source>
</evidence>
<organism>
    <name type="scientific">Bradyrhizobium sp. (strain ORS 278)</name>
    <dbReference type="NCBI Taxonomy" id="114615"/>
    <lineage>
        <taxon>Bacteria</taxon>
        <taxon>Pseudomonadati</taxon>
        <taxon>Pseudomonadota</taxon>
        <taxon>Alphaproteobacteria</taxon>
        <taxon>Hyphomicrobiales</taxon>
        <taxon>Nitrobacteraceae</taxon>
        <taxon>Bradyrhizobium</taxon>
    </lineage>
</organism>
<name>IHFB_BRASO</name>
<dbReference type="EMBL" id="CU234118">
    <property type="protein sequence ID" value="CAL74065.1"/>
    <property type="molecule type" value="Genomic_DNA"/>
</dbReference>
<dbReference type="RefSeq" id="WP_011923365.1">
    <property type="nucleotide sequence ID" value="NC_009445.1"/>
</dbReference>
<dbReference type="SMR" id="A4YJI9"/>
<dbReference type="STRING" id="114615.BRADO0094"/>
<dbReference type="KEGG" id="bra:BRADO0094"/>
<dbReference type="eggNOG" id="COG0776">
    <property type="taxonomic scope" value="Bacteria"/>
</dbReference>
<dbReference type="HOGENOM" id="CLU_105066_2_0_5"/>
<dbReference type="OrthoDB" id="9804203at2"/>
<dbReference type="Proteomes" id="UP000001994">
    <property type="component" value="Chromosome"/>
</dbReference>
<dbReference type="GO" id="GO:0005694">
    <property type="term" value="C:chromosome"/>
    <property type="evidence" value="ECO:0007669"/>
    <property type="project" value="InterPro"/>
</dbReference>
<dbReference type="GO" id="GO:0005829">
    <property type="term" value="C:cytosol"/>
    <property type="evidence" value="ECO:0007669"/>
    <property type="project" value="TreeGrafter"/>
</dbReference>
<dbReference type="GO" id="GO:0003677">
    <property type="term" value="F:DNA binding"/>
    <property type="evidence" value="ECO:0007669"/>
    <property type="project" value="UniProtKB-UniRule"/>
</dbReference>
<dbReference type="GO" id="GO:0030527">
    <property type="term" value="F:structural constituent of chromatin"/>
    <property type="evidence" value="ECO:0007669"/>
    <property type="project" value="InterPro"/>
</dbReference>
<dbReference type="GO" id="GO:0006310">
    <property type="term" value="P:DNA recombination"/>
    <property type="evidence" value="ECO:0007669"/>
    <property type="project" value="UniProtKB-UniRule"/>
</dbReference>
<dbReference type="GO" id="GO:0006355">
    <property type="term" value="P:regulation of DNA-templated transcription"/>
    <property type="evidence" value="ECO:0007669"/>
    <property type="project" value="UniProtKB-UniRule"/>
</dbReference>
<dbReference type="GO" id="GO:0006417">
    <property type="term" value="P:regulation of translation"/>
    <property type="evidence" value="ECO:0007669"/>
    <property type="project" value="UniProtKB-UniRule"/>
</dbReference>
<dbReference type="CDD" id="cd13836">
    <property type="entry name" value="IHF_B"/>
    <property type="match status" value="1"/>
</dbReference>
<dbReference type="FunFam" id="4.10.520.10:FF:000008">
    <property type="entry name" value="Integration host factor subunit beta"/>
    <property type="match status" value="1"/>
</dbReference>
<dbReference type="Gene3D" id="4.10.520.10">
    <property type="entry name" value="IHF-like DNA-binding proteins"/>
    <property type="match status" value="1"/>
</dbReference>
<dbReference type="HAMAP" id="MF_00381">
    <property type="entry name" value="IHF_beta"/>
    <property type="match status" value="1"/>
</dbReference>
<dbReference type="InterPro" id="IPR000119">
    <property type="entry name" value="Hist_DNA-bd"/>
</dbReference>
<dbReference type="InterPro" id="IPR020816">
    <property type="entry name" value="Histone-like_DNA-bd_CS"/>
</dbReference>
<dbReference type="InterPro" id="IPR010992">
    <property type="entry name" value="IHF-like_DNA-bd_dom_sf"/>
</dbReference>
<dbReference type="InterPro" id="IPR005685">
    <property type="entry name" value="IHF_beta"/>
</dbReference>
<dbReference type="NCBIfam" id="TIGR00988">
    <property type="entry name" value="hip"/>
    <property type="match status" value="1"/>
</dbReference>
<dbReference type="NCBIfam" id="NF001222">
    <property type="entry name" value="PRK00199.1"/>
    <property type="match status" value="1"/>
</dbReference>
<dbReference type="PANTHER" id="PTHR33175">
    <property type="entry name" value="DNA-BINDING PROTEIN HU"/>
    <property type="match status" value="1"/>
</dbReference>
<dbReference type="PANTHER" id="PTHR33175:SF5">
    <property type="entry name" value="INTEGRATION HOST FACTOR SUBUNIT BETA"/>
    <property type="match status" value="1"/>
</dbReference>
<dbReference type="Pfam" id="PF00216">
    <property type="entry name" value="Bac_DNA_binding"/>
    <property type="match status" value="1"/>
</dbReference>
<dbReference type="PRINTS" id="PR01727">
    <property type="entry name" value="DNABINDINGHU"/>
</dbReference>
<dbReference type="SMART" id="SM00411">
    <property type="entry name" value="BHL"/>
    <property type="match status" value="1"/>
</dbReference>
<dbReference type="SUPFAM" id="SSF47729">
    <property type="entry name" value="IHF-like DNA-binding proteins"/>
    <property type="match status" value="1"/>
</dbReference>
<dbReference type="PROSITE" id="PS00045">
    <property type="entry name" value="HISTONE_LIKE"/>
    <property type="match status" value="1"/>
</dbReference>
<feature type="chain" id="PRO_1000060588" description="Integration host factor subunit beta">
    <location>
        <begin position="1"/>
        <end position="105"/>
    </location>
</feature>
<proteinExistence type="inferred from homology"/>
<accession>A4YJI9</accession>